<accession>A7X0I2</accession>
<sequence length="1217" mass="141259">MTIPEKPQGVIWTDAQWQSIYATGQDVLVAAAAGSGKTAVLVERIIQKILRDGIDVDRLLVVTFTNLSAREMKHRVDQRIQEASIADPANAHLKNQRIKIHQAQISTLHSFCLKLIQQHYDVLNIDPNFRTSSEAENILLLEQTIDEVIEQHYDILDPAFIELTEQLSSDRSDDQFRMIIKQLYFFSVANPNPTNWLDQLVTPYEEEAQQAQLIQLLTDLSKVFITAAYDALNKAYDLFSMMDGVDKHLAVIEDERRLMGRVLEGGFIDIPYLTDHEFGARLPNVTAKIKEANEMMVDALEDAKLQYKKYKSLIDKVKNDYFSREADDLKADMQQLAPRVKYLARIVKDVMSEFNRKKRSKNILDFSDYEHFALQILTNEDGSPSEIAESYRQHFQEILVDEYQDTNRVQEKILSCIKTGDEHNGNLFMVGDVKQSIYKFRQADPSLFIEKYQRFTIDGDGTGRRIDLSQNFRSRKEVLSTTNYIFKHMMDEQVGEVKYDEAAQLYYGAPYDESDHPVNLKVLVEADQEHSDLTGSEQEAHFIVEQVKDILEHQKVYDMKTGSYRSATYKDIVILERSFGQARNLQQAFKNEDIPFHVNSREGYFEQTEVRLVLSFLRAIDNPLQDIYLVGLMRSVIYQFKEDELAQIRILSPNDDYFYQSIVNYINDEAADAILVDKLKMFLSDIQSYQQYSKDHPVYQLIDKFYNDHYVIQYFSGLIGGRGRRANLYGLFNKAIEFENSSFRGLYQFIRFIDELIERGKDFGEENVVGPNDNVVRMMTIHSSKGLEFPFVIYSGLSKDFNKRDLKQPVILNQQFGLGMDYFDVDKEMAFPSLASVAYKAVAEKELVSEEMRLVYVALTRAKEQLYLIGRVKNDKSLLELEQLSISGEHIAVNERLTSPNPFHLIYSILSKHQSASIPDDLKFEKDIAQVEDSSRPNVNISIIYFEDVSTETILDNNEYRSVNQLETMQNGNEDVKAQIKHQLDYQYPYVNDTKKPSKQSVSELKRQYETEESGTSYERVRQYRIGFSTYERPKFLSEQGKRKANEIGTLMHTVMQHLPFKKERISEVELHQYIDGLIDKHIIEADAKKDIRMDEIMTFINSELYSIIAEAEQVYRELPFVVNQALVDQLPQGDEDVSIIQGMIDLIFVKDGVHYFVDYKTDAFNRRRGMTDEEIGTQLKNKYKIQMKYYQNTLQTILNKEVKGYLYFFKFGTLQL</sequence>
<dbReference type="EC" id="3.1.-.-" evidence="1"/>
<dbReference type="EC" id="5.6.2.4" evidence="1"/>
<dbReference type="EMBL" id="AP009324">
    <property type="protein sequence ID" value="BAF77845.1"/>
    <property type="molecule type" value="Genomic_DNA"/>
</dbReference>
<dbReference type="RefSeq" id="WP_000154921.1">
    <property type="nucleotide sequence ID" value="NC_009782.1"/>
</dbReference>
<dbReference type="SMR" id="A7X0I2"/>
<dbReference type="KEGG" id="saw:SAHV_0962"/>
<dbReference type="HOGENOM" id="CLU_001114_3_1_9"/>
<dbReference type="GO" id="GO:0005829">
    <property type="term" value="C:cytosol"/>
    <property type="evidence" value="ECO:0007669"/>
    <property type="project" value="TreeGrafter"/>
</dbReference>
<dbReference type="GO" id="GO:0033202">
    <property type="term" value="C:DNA helicase complex"/>
    <property type="evidence" value="ECO:0007669"/>
    <property type="project" value="TreeGrafter"/>
</dbReference>
<dbReference type="GO" id="GO:0043138">
    <property type="term" value="F:3'-5' DNA helicase activity"/>
    <property type="evidence" value="ECO:0007669"/>
    <property type="project" value="UniProtKB-UniRule"/>
</dbReference>
<dbReference type="GO" id="GO:0008408">
    <property type="term" value="F:3'-5' exonuclease activity"/>
    <property type="evidence" value="ECO:0007669"/>
    <property type="project" value="UniProtKB-UniRule"/>
</dbReference>
<dbReference type="GO" id="GO:0005524">
    <property type="term" value="F:ATP binding"/>
    <property type="evidence" value="ECO:0007669"/>
    <property type="project" value="UniProtKB-UniRule"/>
</dbReference>
<dbReference type="GO" id="GO:0016887">
    <property type="term" value="F:ATP hydrolysis activity"/>
    <property type="evidence" value="ECO:0007669"/>
    <property type="project" value="RHEA"/>
</dbReference>
<dbReference type="GO" id="GO:0003690">
    <property type="term" value="F:double-stranded DNA binding"/>
    <property type="evidence" value="ECO:0007669"/>
    <property type="project" value="UniProtKB-UniRule"/>
</dbReference>
<dbReference type="GO" id="GO:0000724">
    <property type="term" value="P:double-strand break repair via homologous recombination"/>
    <property type="evidence" value="ECO:0007669"/>
    <property type="project" value="UniProtKB-UniRule"/>
</dbReference>
<dbReference type="CDD" id="cd17932">
    <property type="entry name" value="DEXQc_UvrD"/>
    <property type="match status" value="2"/>
</dbReference>
<dbReference type="FunFam" id="3.40.50.300:FF:001196">
    <property type="entry name" value="ATP-dependent helicase/nuclease subunit A"/>
    <property type="match status" value="1"/>
</dbReference>
<dbReference type="FunFam" id="3.40.50.300:FF:001715">
    <property type="entry name" value="ATP-dependent helicase/nuclease subunit A"/>
    <property type="match status" value="1"/>
</dbReference>
<dbReference type="Gene3D" id="3.90.320.10">
    <property type="match status" value="1"/>
</dbReference>
<dbReference type="Gene3D" id="3.40.50.300">
    <property type="entry name" value="P-loop containing nucleotide triphosphate hydrolases"/>
    <property type="match status" value="4"/>
</dbReference>
<dbReference type="Gene3D" id="1.10.486.10">
    <property type="entry name" value="PCRA, domain 4"/>
    <property type="match status" value="1"/>
</dbReference>
<dbReference type="HAMAP" id="MF_01451">
    <property type="entry name" value="AddA"/>
    <property type="match status" value="1"/>
</dbReference>
<dbReference type="InterPro" id="IPR014152">
    <property type="entry name" value="AddA"/>
</dbReference>
<dbReference type="InterPro" id="IPR014017">
    <property type="entry name" value="DNA_helicase_UvrD-like_C"/>
</dbReference>
<dbReference type="InterPro" id="IPR000212">
    <property type="entry name" value="DNA_helicase_UvrD/REP"/>
</dbReference>
<dbReference type="InterPro" id="IPR027417">
    <property type="entry name" value="P-loop_NTPase"/>
</dbReference>
<dbReference type="InterPro" id="IPR011604">
    <property type="entry name" value="PDDEXK-like_dom_sf"/>
</dbReference>
<dbReference type="InterPro" id="IPR038726">
    <property type="entry name" value="PDDEXK_AddAB-type"/>
</dbReference>
<dbReference type="InterPro" id="IPR011335">
    <property type="entry name" value="Restrct_endonuc-II-like"/>
</dbReference>
<dbReference type="InterPro" id="IPR014016">
    <property type="entry name" value="UvrD-like_ATP-bd"/>
</dbReference>
<dbReference type="NCBIfam" id="TIGR02785">
    <property type="entry name" value="addA_Gpos"/>
    <property type="match status" value="1"/>
</dbReference>
<dbReference type="PANTHER" id="PTHR11070:SF48">
    <property type="entry name" value="ATP-DEPENDENT HELICASE_NUCLEASE SUBUNIT A"/>
    <property type="match status" value="1"/>
</dbReference>
<dbReference type="PANTHER" id="PTHR11070">
    <property type="entry name" value="UVRD / RECB / PCRA DNA HELICASE FAMILY MEMBER"/>
    <property type="match status" value="1"/>
</dbReference>
<dbReference type="Pfam" id="PF12705">
    <property type="entry name" value="PDDEXK_1"/>
    <property type="match status" value="1"/>
</dbReference>
<dbReference type="Pfam" id="PF00580">
    <property type="entry name" value="UvrD-helicase"/>
    <property type="match status" value="1"/>
</dbReference>
<dbReference type="Pfam" id="PF13361">
    <property type="entry name" value="UvrD_C"/>
    <property type="match status" value="1"/>
</dbReference>
<dbReference type="SUPFAM" id="SSF52540">
    <property type="entry name" value="P-loop containing nucleoside triphosphate hydrolases"/>
    <property type="match status" value="1"/>
</dbReference>
<dbReference type="SUPFAM" id="SSF52980">
    <property type="entry name" value="Restriction endonuclease-like"/>
    <property type="match status" value="1"/>
</dbReference>
<dbReference type="PROSITE" id="PS51198">
    <property type="entry name" value="UVRD_HELICASE_ATP_BIND"/>
    <property type="match status" value="1"/>
</dbReference>
<dbReference type="PROSITE" id="PS51217">
    <property type="entry name" value="UVRD_HELICASE_CTER"/>
    <property type="match status" value="1"/>
</dbReference>
<name>ADDA_STAA1</name>
<organism>
    <name type="scientific">Staphylococcus aureus (strain Mu3 / ATCC 700698)</name>
    <dbReference type="NCBI Taxonomy" id="418127"/>
    <lineage>
        <taxon>Bacteria</taxon>
        <taxon>Bacillati</taxon>
        <taxon>Bacillota</taxon>
        <taxon>Bacilli</taxon>
        <taxon>Bacillales</taxon>
        <taxon>Staphylococcaceae</taxon>
        <taxon>Staphylococcus</taxon>
    </lineage>
</organism>
<proteinExistence type="inferred from homology"/>
<evidence type="ECO:0000255" key="1">
    <source>
        <dbReference type="HAMAP-Rule" id="MF_01451"/>
    </source>
</evidence>
<reference key="1">
    <citation type="journal article" date="2008" name="Antimicrob. Agents Chemother.">
        <title>Mutated response regulator graR is responsible for phenotypic conversion of Staphylococcus aureus from heterogeneous vancomycin-intermediate resistance to vancomycin-intermediate resistance.</title>
        <authorList>
            <person name="Neoh H.-M."/>
            <person name="Cui L."/>
            <person name="Yuzawa H."/>
            <person name="Takeuchi F."/>
            <person name="Matsuo M."/>
            <person name="Hiramatsu K."/>
        </authorList>
    </citation>
    <scope>NUCLEOTIDE SEQUENCE [LARGE SCALE GENOMIC DNA]</scope>
    <source>
        <strain>Mu3 / ATCC 700698</strain>
    </source>
</reference>
<keyword id="KW-0067">ATP-binding</keyword>
<keyword id="KW-0227">DNA damage</keyword>
<keyword id="KW-0234">DNA repair</keyword>
<keyword id="KW-0238">DNA-binding</keyword>
<keyword id="KW-0269">Exonuclease</keyword>
<keyword id="KW-0347">Helicase</keyword>
<keyword id="KW-0378">Hydrolase</keyword>
<keyword id="KW-0413">Isomerase</keyword>
<keyword id="KW-0540">Nuclease</keyword>
<keyword id="KW-0547">Nucleotide-binding</keyword>
<protein>
    <recommendedName>
        <fullName evidence="1">ATP-dependent helicase/nuclease subunit A</fullName>
        <ecNumber evidence="1">3.1.-.-</ecNumber>
        <ecNumber evidence="1">5.6.2.4</ecNumber>
    </recommendedName>
    <alternativeName>
        <fullName evidence="1">ATP-dependent helicase/nuclease AddA</fullName>
    </alternativeName>
    <alternativeName>
        <fullName evidence="1">DNA 3'-5' helicase AddA</fullName>
    </alternativeName>
</protein>
<gene>
    <name evidence="1" type="primary">addA</name>
    <name type="ordered locus">SAHV_0962</name>
</gene>
<comment type="function">
    <text evidence="1">The heterodimer acts as both an ATP-dependent DNA helicase and an ATP-dependent, dual-direction single-stranded exonuclease. Recognizes the chi site generating a DNA molecule suitable for the initiation of homologous recombination. The AddA nuclease domain is required for chi fragment generation; this subunit has the helicase and 3' -&gt; 5' nuclease activities.</text>
</comment>
<comment type="catalytic activity">
    <reaction evidence="1">
        <text>Couples ATP hydrolysis with the unwinding of duplex DNA by translocating in the 3'-5' direction.</text>
        <dbReference type="EC" id="5.6.2.4"/>
    </reaction>
</comment>
<comment type="catalytic activity">
    <reaction evidence="1">
        <text>ATP + H2O = ADP + phosphate + H(+)</text>
        <dbReference type="Rhea" id="RHEA:13065"/>
        <dbReference type="ChEBI" id="CHEBI:15377"/>
        <dbReference type="ChEBI" id="CHEBI:15378"/>
        <dbReference type="ChEBI" id="CHEBI:30616"/>
        <dbReference type="ChEBI" id="CHEBI:43474"/>
        <dbReference type="ChEBI" id="CHEBI:456216"/>
        <dbReference type="EC" id="5.6.2.4"/>
    </reaction>
</comment>
<comment type="cofactor">
    <cofactor evidence="1">
        <name>Mg(2+)</name>
        <dbReference type="ChEBI" id="CHEBI:18420"/>
    </cofactor>
</comment>
<comment type="subunit">
    <text evidence="1">Heterodimer of AddA and AddB/RexB.</text>
</comment>
<comment type="similarity">
    <text evidence="1">Belongs to the helicase family. AddA subfamily.</text>
</comment>
<feature type="chain" id="PRO_0000379313" description="ATP-dependent helicase/nuclease subunit A">
    <location>
        <begin position="1"/>
        <end position="1217"/>
    </location>
</feature>
<feature type="domain" description="UvrD-like helicase ATP-binding" evidence="1">
    <location>
        <begin position="10"/>
        <end position="475"/>
    </location>
</feature>
<feature type="domain" description="UvrD-like helicase C-terminal" evidence="1">
    <location>
        <begin position="476"/>
        <end position="786"/>
    </location>
</feature>
<feature type="binding site" evidence="1">
    <location>
        <begin position="31"/>
        <end position="38"/>
    </location>
    <ligand>
        <name>ATP</name>
        <dbReference type="ChEBI" id="CHEBI:30616"/>
    </ligand>
</feature>